<protein>
    <recommendedName>
        <fullName>Protein OPG070</fullName>
    </recommendedName>
    <alternativeName>
        <fullName>Protein E8</fullName>
    </alternativeName>
</protein>
<keyword id="KW-1035">Host cytoplasm</keyword>
<keyword id="KW-1038">Host endoplasmic reticulum</keyword>
<keyword id="KW-1043">Host membrane</keyword>
<keyword id="KW-0472">Membrane</keyword>
<keyword id="KW-0597">Phosphoprotein</keyword>
<keyword id="KW-1185">Reference proteome</keyword>
<keyword id="KW-0812">Transmembrane</keyword>
<keyword id="KW-1133">Transmembrane helix</keyword>
<keyword id="KW-0946">Virion</keyword>
<proteinExistence type="inferred from homology"/>
<reference key="1">
    <citation type="journal article" date="1993" name="Virus Res.">
        <title>Analysis of the nucleotide sequence of a 43 kbp segment of the genome of variola virus India-1967 strain.</title>
        <authorList>
            <person name="Shchelkunov S.N."/>
            <person name="Blinov V.M."/>
            <person name="Resenchuk S.M."/>
            <person name="Totmenin A.V."/>
            <person name="Sandakhchiev L.S."/>
        </authorList>
    </citation>
    <scope>NUCLEOTIDE SEQUENCE [GENOMIC DNA]</scope>
</reference>
<reference key="2">
    <citation type="journal article" date="1993" name="FEBS Lett.">
        <title>Genes of variola and vaccinia viruses necessary to overcome the host protective mechanisms.</title>
        <authorList>
            <person name="Shchelkunov S.N."/>
            <person name="Blinov V.M."/>
            <person name="Sandakhchiev L.S."/>
        </authorList>
    </citation>
    <scope>NUCLEOTIDE SEQUENCE [LARGE SCALE GENOMIC DNA]</scope>
</reference>
<feature type="chain" id="PRO_0000099463" description="Protein OPG070">
    <location>
        <begin position="1"/>
        <end position="273"/>
    </location>
</feature>
<feature type="transmembrane region" description="Helical" evidence="2">
    <location>
        <begin position="123"/>
        <end position="143"/>
    </location>
</feature>
<feature type="transmembrane region" description="Helical" evidence="2">
    <location>
        <begin position="223"/>
        <end position="243"/>
    </location>
</feature>
<sequence length="273" mass="31898">MAAVVPRFDDVYKNAQRRILDQETFFSRGLGRPLMKNTYLFDNYAYGWIPETAIWSSRYANLDASDYYPISLGLLKKFKFLMSLYKGPIPVYEEKVNTEFIANGSFSGRYVSYLRKFSALPTNEFISFLLLTSIPIYNILFWFKNTQFDITKHTLFRYVYTDNAKHLALARYMHQTGDYKPLFSRLKENYIFTGPVPIGIKDIDHPNLSRARSPSDYETLANISTILYFTKYDPVLMFLLFYVPGYSITTKITPAVEYLMDKLKLTKNDVQLL</sequence>
<name>PG070_VAR67</name>
<gene>
    <name type="primary">OPG070</name>
    <name type="ORF">E8R</name>
</gene>
<accession>P0DSY7</accession>
<accession>P33820</accession>
<organism>
    <name type="scientific">Variola virus (isolate Human/India/Ind3/1967)</name>
    <name type="common">VARV</name>
    <name type="synonym">Smallpox virus</name>
    <dbReference type="NCBI Taxonomy" id="587200"/>
    <lineage>
        <taxon>Viruses</taxon>
        <taxon>Varidnaviria</taxon>
        <taxon>Bamfordvirae</taxon>
        <taxon>Nucleocytoviricota</taxon>
        <taxon>Pokkesviricetes</taxon>
        <taxon>Chitovirales</taxon>
        <taxon>Poxviridae</taxon>
        <taxon>Chordopoxvirinae</taxon>
        <taxon>Orthopoxvirus</taxon>
        <taxon>Variola virus</taxon>
    </lineage>
</organism>
<dbReference type="EMBL" id="X69198">
    <property type="protein sequence ID" value="CAA48990.1"/>
    <property type="molecule type" value="Genomic_DNA"/>
</dbReference>
<dbReference type="PIR" id="B36842">
    <property type="entry name" value="B36842"/>
</dbReference>
<dbReference type="RefSeq" id="NP_042093.1">
    <property type="nucleotide sequence ID" value="NC_001611.1"/>
</dbReference>
<dbReference type="GeneID" id="1486414"/>
<dbReference type="KEGG" id="vg:1486414"/>
<dbReference type="Proteomes" id="UP000002060">
    <property type="component" value="Segment"/>
</dbReference>
<dbReference type="GO" id="GO:0044167">
    <property type="term" value="C:host cell endoplasmic reticulum membrane"/>
    <property type="evidence" value="ECO:0007669"/>
    <property type="project" value="UniProtKB-SubCell"/>
</dbReference>
<dbReference type="GO" id="GO:0016020">
    <property type="term" value="C:membrane"/>
    <property type="evidence" value="ECO:0007669"/>
    <property type="project" value="UniProtKB-KW"/>
</dbReference>
<dbReference type="GO" id="GO:0044423">
    <property type="term" value="C:virion component"/>
    <property type="evidence" value="ECO:0007669"/>
    <property type="project" value="UniProtKB-KW"/>
</dbReference>
<dbReference type="InterPro" id="IPR005057">
    <property type="entry name" value="Poxvirus_E8"/>
</dbReference>
<dbReference type="Pfam" id="PF03394">
    <property type="entry name" value="Pox_E8"/>
    <property type="match status" value="1"/>
</dbReference>
<dbReference type="PIRSF" id="PIRSF015690">
    <property type="entry name" value="VAC_E8R"/>
    <property type="match status" value="1"/>
</dbReference>
<evidence type="ECO:0000250" key="1">
    <source>
        <dbReference type="UniProtKB" id="P23372"/>
    </source>
</evidence>
<evidence type="ECO:0000255" key="2"/>
<evidence type="ECO:0000305" key="3"/>
<comment type="function">
    <text evidence="1">May play a role in the biogenesis of the viral factories by recruiting and wrapping DNA replication sites in endoplasmic reticulum derived membranes. Later in infection, phosphorylation by the late viral kinase OPG054 might decrease DNA-binding ability and trigger ER membranes disassembly. Binds DNA in vitro.</text>
</comment>
<comment type="subcellular location">
    <subcellularLocation>
        <location evidence="1">Virion</location>
    </subcellularLocation>
    <subcellularLocation>
        <location evidence="1">Host endoplasmic reticulum membrane</location>
        <topology evidence="1">Multi-pass membrane protein</topology>
    </subcellularLocation>
    <subcellularLocation>
        <location evidence="1">Host cytoplasm</location>
    </subcellularLocation>
    <text evidence="1">Localizes to the inside membrane of cytoplasmic virus factories. Component of the core of mature virions.</text>
</comment>
<comment type="induction">
    <text evidence="1">Expressed in the intermediate phase of the viral replicative cycle.</text>
</comment>
<comment type="PTM">
    <text evidence="1">Phosphorylated by OPG054 kinase in vitro.</text>
</comment>
<comment type="similarity">
    <text evidence="3">Belongs to the orthopoxvirus OPG070 family.</text>
</comment>
<organismHost>
    <name type="scientific">Homo sapiens</name>
    <name type="common">Human</name>
    <dbReference type="NCBI Taxonomy" id="9606"/>
</organismHost>